<feature type="peptide" id="PRO_0000421507" description="Extended FMRFamide-4" evidence="3">
    <location>
        <begin position="1"/>
        <end position="9"/>
    </location>
</feature>
<feature type="modified residue" description="Leucine amide" evidence="3">
    <location>
        <position position="9"/>
    </location>
</feature>
<feature type="unsure residue" description="L or I" evidence="3">
    <location>
        <position position="7"/>
    </location>
</feature>
<feature type="unsure residue" description="L or I" evidence="3">
    <location>
        <position position="9"/>
    </location>
</feature>
<comment type="function">
    <text evidence="1">FMRFamides and FMRFamide-like peptides are neuropeptides.</text>
</comment>
<comment type="subcellular location">
    <subcellularLocation>
        <location evidence="6">Secreted</location>
    </subcellularLocation>
</comment>
<comment type="similarity">
    <text evidence="2">Belongs to the FARP (FMRF amide related peptide) family.</text>
</comment>
<reference evidence="5" key="1">
    <citation type="journal article" date="2012" name="Syst. Biol.">
        <title>Peptidomics-based phylogeny and biogeography of Mantophasmatodea (Hexapoda).</title>
        <authorList>
            <person name="Predel R."/>
            <person name="Neupert S."/>
            <person name="Huetteroth W."/>
            <person name="Kahnt J."/>
            <person name="Waidelich D."/>
            <person name="Roth S."/>
        </authorList>
    </citation>
    <scope>PROTEIN SEQUENCE</scope>
    <scope>AMIDATION AT LEU-9</scope>
    <source>
        <tissue evidence="3">Thoracic perisympathetic organs</tissue>
    </source>
</reference>
<name>FAR4_LOBRE</name>
<keyword id="KW-0027">Amidation</keyword>
<keyword id="KW-0903">Direct protein sequencing</keyword>
<keyword id="KW-0527">Neuropeptide</keyword>
<keyword id="KW-0964">Secreted</keyword>
<proteinExistence type="evidence at protein level"/>
<protein>
    <recommendedName>
        <fullName evidence="4">Extended FMRFamide-4</fullName>
        <shortName evidence="4">FMRFa-4</shortName>
    </recommendedName>
</protein>
<evidence type="ECO:0000250" key="1">
    <source>
        <dbReference type="UniProtKB" id="P34405"/>
    </source>
</evidence>
<evidence type="ECO:0000255" key="2"/>
<evidence type="ECO:0000269" key="3">
    <source>
    </source>
</evidence>
<evidence type="ECO:0000303" key="4">
    <source>
    </source>
</evidence>
<evidence type="ECO:0000305" key="5"/>
<evidence type="ECO:0000305" key="6">
    <source>
    </source>
</evidence>
<sequence>GVDSSFLRL</sequence>
<organism>
    <name type="scientific">Lobatophasma redelinghuysense</name>
    <name type="common">Gladiator</name>
    <name type="synonym">Heel-walker</name>
    <dbReference type="NCBI Taxonomy" id="253128"/>
    <lineage>
        <taxon>Eukaryota</taxon>
        <taxon>Metazoa</taxon>
        <taxon>Ecdysozoa</taxon>
        <taxon>Arthropoda</taxon>
        <taxon>Hexapoda</taxon>
        <taxon>Insecta</taxon>
        <taxon>Pterygota</taxon>
        <taxon>Neoptera</taxon>
        <taxon>Polyneoptera</taxon>
        <taxon>Mantophasmatodea</taxon>
        <taxon>Austrophasmatidae</taxon>
        <taxon>Lobatophasma</taxon>
    </lineage>
</organism>
<dbReference type="GO" id="GO:0005576">
    <property type="term" value="C:extracellular region"/>
    <property type="evidence" value="ECO:0007669"/>
    <property type="project" value="UniProtKB-SubCell"/>
</dbReference>
<dbReference type="GO" id="GO:0007218">
    <property type="term" value="P:neuropeptide signaling pathway"/>
    <property type="evidence" value="ECO:0007669"/>
    <property type="project" value="UniProtKB-KW"/>
</dbReference>
<accession>B3A084</accession>